<evidence type="ECO:0000255" key="1">
    <source>
        <dbReference type="HAMAP-Rule" id="MF_00532"/>
    </source>
</evidence>
<evidence type="ECO:0000305" key="2"/>
<organism>
    <name type="scientific">Shigella boydii serotype 4 (strain Sb227)</name>
    <dbReference type="NCBI Taxonomy" id="300268"/>
    <lineage>
        <taxon>Bacteria</taxon>
        <taxon>Pseudomonadati</taxon>
        <taxon>Pseudomonadota</taxon>
        <taxon>Gammaproteobacteria</taxon>
        <taxon>Enterobacterales</taxon>
        <taxon>Enterobacteriaceae</taxon>
        <taxon>Shigella</taxon>
    </lineage>
</organism>
<accession>Q31W98</accession>
<proteinExistence type="inferred from homology"/>
<sequence length="130" mass="14856">MAENQYYGTGRRKSSAARVFIKPGNGKIVINQRSLEQYFGRETARMVVRQPLELVDMVEKLDLYITVKGGGISGQAGAIRHGITRALMEYDESLRSELRKAGFVTRDARQVERKKVGLRKARRRPQFSKR</sequence>
<gene>
    <name evidence="1" type="primary">rpsI</name>
    <name type="ordered locus">SBO_3159</name>
</gene>
<dbReference type="EMBL" id="CP000036">
    <property type="protein sequence ID" value="ABB67660.1"/>
    <property type="molecule type" value="Genomic_DNA"/>
</dbReference>
<dbReference type="RefSeq" id="WP_000829818.1">
    <property type="nucleotide sequence ID" value="NC_007613.1"/>
</dbReference>
<dbReference type="SMR" id="Q31W98"/>
<dbReference type="GeneID" id="98390344"/>
<dbReference type="KEGG" id="sbo:SBO_3159"/>
<dbReference type="HOGENOM" id="CLU_046483_2_1_6"/>
<dbReference type="Proteomes" id="UP000007067">
    <property type="component" value="Chromosome"/>
</dbReference>
<dbReference type="GO" id="GO:0022627">
    <property type="term" value="C:cytosolic small ribosomal subunit"/>
    <property type="evidence" value="ECO:0007669"/>
    <property type="project" value="TreeGrafter"/>
</dbReference>
<dbReference type="GO" id="GO:0003723">
    <property type="term" value="F:RNA binding"/>
    <property type="evidence" value="ECO:0007669"/>
    <property type="project" value="TreeGrafter"/>
</dbReference>
<dbReference type="GO" id="GO:0003735">
    <property type="term" value="F:structural constituent of ribosome"/>
    <property type="evidence" value="ECO:0007669"/>
    <property type="project" value="InterPro"/>
</dbReference>
<dbReference type="GO" id="GO:0006412">
    <property type="term" value="P:translation"/>
    <property type="evidence" value="ECO:0007669"/>
    <property type="project" value="UniProtKB-UniRule"/>
</dbReference>
<dbReference type="FunFam" id="3.30.230.10:FF:000001">
    <property type="entry name" value="30S ribosomal protein S9"/>
    <property type="match status" value="1"/>
</dbReference>
<dbReference type="Gene3D" id="3.30.230.10">
    <property type="match status" value="1"/>
</dbReference>
<dbReference type="HAMAP" id="MF_00532_B">
    <property type="entry name" value="Ribosomal_uS9_B"/>
    <property type="match status" value="1"/>
</dbReference>
<dbReference type="InterPro" id="IPR020568">
    <property type="entry name" value="Ribosomal_Su5_D2-typ_SF"/>
</dbReference>
<dbReference type="InterPro" id="IPR000754">
    <property type="entry name" value="Ribosomal_uS9"/>
</dbReference>
<dbReference type="InterPro" id="IPR023035">
    <property type="entry name" value="Ribosomal_uS9_bac/plastid"/>
</dbReference>
<dbReference type="InterPro" id="IPR020574">
    <property type="entry name" value="Ribosomal_uS9_CS"/>
</dbReference>
<dbReference type="InterPro" id="IPR014721">
    <property type="entry name" value="Ribsml_uS5_D2-typ_fold_subgr"/>
</dbReference>
<dbReference type="NCBIfam" id="NF001099">
    <property type="entry name" value="PRK00132.1"/>
    <property type="match status" value="1"/>
</dbReference>
<dbReference type="PANTHER" id="PTHR21569">
    <property type="entry name" value="RIBOSOMAL PROTEIN S9"/>
    <property type="match status" value="1"/>
</dbReference>
<dbReference type="PANTHER" id="PTHR21569:SF1">
    <property type="entry name" value="SMALL RIBOSOMAL SUBUNIT PROTEIN US9M"/>
    <property type="match status" value="1"/>
</dbReference>
<dbReference type="Pfam" id="PF00380">
    <property type="entry name" value="Ribosomal_S9"/>
    <property type="match status" value="1"/>
</dbReference>
<dbReference type="SUPFAM" id="SSF54211">
    <property type="entry name" value="Ribosomal protein S5 domain 2-like"/>
    <property type="match status" value="1"/>
</dbReference>
<dbReference type="PROSITE" id="PS00360">
    <property type="entry name" value="RIBOSOMAL_S9"/>
    <property type="match status" value="1"/>
</dbReference>
<keyword id="KW-0687">Ribonucleoprotein</keyword>
<keyword id="KW-0689">Ribosomal protein</keyword>
<reference key="1">
    <citation type="journal article" date="2005" name="Nucleic Acids Res.">
        <title>Genome dynamics and diversity of Shigella species, the etiologic agents of bacillary dysentery.</title>
        <authorList>
            <person name="Yang F."/>
            <person name="Yang J."/>
            <person name="Zhang X."/>
            <person name="Chen L."/>
            <person name="Jiang Y."/>
            <person name="Yan Y."/>
            <person name="Tang X."/>
            <person name="Wang J."/>
            <person name="Xiong Z."/>
            <person name="Dong J."/>
            <person name="Xue Y."/>
            <person name="Zhu Y."/>
            <person name="Xu X."/>
            <person name="Sun L."/>
            <person name="Chen S."/>
            <person name="Nie H."/>
            <person name="Peng J."/>
            <person name="Xu J."/>
            <person name="Wang Y."/>
            <person name="Yuan Z."/>
            <person name="Wen Y."/>
            <person name="Yao Z."/>
            <person name="Shen Y."/>
            <person name="Qiang B."/>
            <person name="Hou Y."/>
            <person name="Yu J."/>
            <person name="Jin Q."/>
        </authorList>
    </citation>
    <scope>NUCLEOTIDE SEQUENCE [LARGE SCALE GENOMIC DNA]</scope>
    <source>
        <strain>Sb227</strain>
    </source>
</reference>
<name>RS9_SHIBS</name>
<protein>
    <recommendedName>
        <fullName evidence="1">Small ribosomal subunit protein uS9</fullName>
    </recommendedName>
    <alternativeName>
        <fullName evidence="2">30S ribosomal protein S9</fullName>
    </alternativeName>
</protein>
<feature type="chain" id="PRO_1000051328" description="Small ribosomal subunit protein uS9">
    <location>
        <begin position="1"/>
        <end position="130"/>
    </location>
</feature>
<comment type="similarity">
    <text evidence="1">Belongs to the universal ribosomal protein uS9 family.</text>
</comment>